<dbReference type="EMBL" id="AF528876">
    <property type="protein sequence ID" value="AAQ09300.1"/>
    <property type="molecule type" value="Genomic_DNA"/>
</dbReference>
<dbReference type="RefSeq" id="YP_011009150.1">
    <property type="nucleotide sequence ID" value="NC_085353.1"/>
</dbReference>
<dbReference type="SMR" id="Q6EYS3"/>
<dbReference type="GeneID" id="87709081"/>
<dbReference type="GO" id="GO:0009535">
    <property type="term" value="C:chloroplast thylakoid membrane"/>
    <property type="evidence" value="ECO:0007669"/>
    <property type="project" value="UniProtKB-SubCell"/>
</dbReference>
<dbReference type="GO" id="GO:0009539">
    <property type="term" value="C:photosystem II reaction center"/>
    <property type="evidence" value="ECO:0007669"/>
    <property type="project" value="InterPro"/>
</dbReference>
<dbReference type="GO" id="GO:0009055">
    <property type="term" value="F:electron transfer activity"/>
    <property type="evidence" value="ECO:0007669"/>
    <property type="project" value="UniProtKB-UniRule"/>
</dbReference>
<dbReference type="GO" id="GO:0020037">
    <property type="term" value="F:heme binding"/>
    <property type="evidence" value="ECO:0007669"/>
    <property type="project" value="InterPro"/>
</dbReference>
<dbReference type="GO" id="GO:0005506">
    <property type="term" value="F:iron ion binding"/>
    <property type="evidence" value="ECO:0007669"/>
    <property type="project" value="UniProtKB-UniRule"/>
</dbReference>
<dbReference type="GO" id="GO:0009767">
    <property type="term" value="P:photosynthetic electron transport chain"/>
    <property type="evidence" value="ECO:0007669"/>
    <property type="project" value="InterPro"/>
</dbReference>
<dbReference type="HAMAP" id="MF_00643">
    <property type="entry name" value="PSII_PsbF"/>
    <property type="match status" value="1"/>
</dbReference>
<dbReference type="InterPro" id="IPR006241">
    <property type="entry name" value="PSII_cyt_b559_bsu"/>
</dbReference>
<dbReference type="InterPro" id="IPR006216">
    <property type="entry name" value="PSII_cyt_b559_CS"/>
</dbReference>
<dbReference type="InterPro" id="IPR013081">
    <property type="entry name" value="PSII_cyt_b559_N"/>
</dbReference>
<dbReference type="NCBIfam" id="TIGR01333">
    <property type="entry name" value="cyt_b559_beta"/>
    <property type="match status" value="1"/>
</dbReference>
<dbReference type="Pfam" id="PF00283">
    <property type="entry name" value="Cytochrom_B559"/>
    <property type="match status" value="1"/>
</dbReference>
<dbReference type="PIRSF" id="PIRSF000037">
    <property type="entry name" value="PsbF"/>
    <property type="match status" value="1"/>
</dbReference>
<dbReference type="SUPFAM" id="SSF161045">
    <property type="entry name" value="Cytochrome b559 subunits"/>
    <property type="match status" value="1"/>
</dbReference>
<dbReference type="PROSITE" id="PS00537">
    <property type="entry name" value="CYTOCHROME_B559"/>
    <property type="match status" value="1"/>
</dbReference>
<protein>
    <recommendedName>
        <fullName evidence="1">Cytochrome b559 subunit beta</fullName>
    </recommendedName>
    <alternativeName>
        <fullName evidence="1">PSII reaction center subunit VI</fullName>
    </alternativeName>
</protein>
<proteinExistence type="inferred from homology"/>
<comment type="function">
    <text evidence="1">This b-type cytochrome is tightly associated with the reaction center of photosystem II (PSII). PSII is a light-driven water:plastoquinone oxidoreductase that uses light energy to abstract electrons from H(2)O, generating O(2) and a proton gradient subsequently used for ATP formation. It consists of a core antenna complex that captures photons, and an electron transfer chain that converts photonic excitation into a charge separation.</text>
</comment>
<comment type="cofactor">
    <cofactor evidence="1">
        <name>heme b</name>
        <dbReference type="ChEBI" id="CHEBI:60344"/>
    </cofactor>
    <text evidence="1">With its partner (PsbE) binds heme. PSII binds additional chlorophylls, carotenoids and specific lipids.</text>
</comment>
<comment type="subunit">
    <text evidence="1">Heterodimer of an alpha subunit and a beta subunit. PSII is composed of 1 copy each of membrane proteins PsbA, PsbB, PsbC, PsbD, PsbE, PsbF, PsbH, PsbI, PsbJ, PsbK, PsbL, PsbM, PsbT, PsbX, PsbY, PsbZ, Psb30/Ycf12, at least 3 peripheral proteins of the oxygen-evolving complex and a large number of cofactors. It forms dimeric complexes.</text>
</comment>
<comment type="subcellular location">
    <subcellularLocation>
        <location evidence="1">Plastid</location>
        <location evidence="1">Chloroplast thylakoid membrane</location>
        <topology evidence="1">Single-pass membrane protein</topology>
    </subcellularLocation>
</comment>
<comment type="similarity">
    <text evidence="1">Belongs to the PsbE/PsbF family.</text>
</comment>
<feature type="chain" id="PRO_0000200401" description="Cytochrome b559 subunit beta">
    <location>
        <begin position="1"/>
        <end position="39"/>
    </location>
</feature>
<feature type="transmembrane region" description="Helical" evidence="1">
    <location>
        <begin position="14"/>
        <end position="30"/>
    </location>
</feature>
<feature type="binding site" description="axial binding residue" evidence="1">
    <location>
        <position position="18"/>
    </location>
    <ligand>
        <name>heme</name>
        <dbReference type="ChEBI" id="CHEBI:30413"/>
        <note>ligand shared with alpha subunit</note>
    </ligand>
    <ligandPart>
        <name>Fe</name>
        <dbReference type="ChEBI" id="CHEBI:18248"/>
    </ligandPart>
</feature>
<gene>
    <name evidence="1" type="primary">psbF</name>
</gene>
<accession>Q6EYS3</accession>
<geneLocation type="chloroplast"/>
<name>PSBF_HYDMC</name>
<reference key="1">
    <citation type="submission" date="2002-07" db="EMBL/GenBank/DDBJ databases">
        <title>Parsing out signal and noise for seed-plant phylogenetic inference.</title>
        <authorList>
            <person name="Graham S.W."/>
            <person name="Rai H.S."/>
            <person name="Ikegami K."/>
            <person name="Reeves P.A."/>
            <person name="Olmstead R.G."/>
        </authorList>
    </citation>
    <scope>NUCLEOTIDE SEQUENCE [GENOMIC DNA]</scope>
</reference>
<organism>
    <name type="scientific">Hydrangea macrophylla</name>
    <name type="common">Bigleaf hydrangea</name>
    <name type="synonym">Viburnum macrophyllum</name>
    <dbReference type="NCBI Taxonomy" id="23110"/>
    <lineage>
        <taxon>Eukaryota</taxon>
        <taxon>Viridiplantae</taxon>
        <taxon>Streptophyta</taxon>
        <taxon>Embryophyta</taxon>
        <taxon>Tracheophyta</taxon>
        <taxon>Spermatophyta</taxon>
        <taxon>Magnoliopsida</taxon>
        <taxon>eudicotyledons</taxon>
        <taxon>Gunneridae</taxon>
        <taxon>Pentapetalae</taxon>
        <taxon>asterids</taxon>
        <taxon>Cornales</taxon>
        <taxon>Hydrangeaceae</taxon>
        <taxon>Hydrangeeae</taxon>
        <taxon>Hydrangea</taxon>
        <taxon>Hydrangea sect. Macrophyllae</taxon>
    </lineage>
</organism>
<evidence type="ECO:0000255" key="1">
    <source>
        <dbReference type="HAMAP-Rule" id="MF_00643"/>
    </source>
</evidence>
<keyword id="KW-0150">Chloroplast</keyword>
<keyword id="KW-0249">Electron transport</keyword>
<keyword id="KW-0349">Heme</keyword>
<keyword id="KW-0408">Iron</keyword>
<keyword id="KW-0472">Membrane</keyword>
<keyword id="KW-0479">Metal-binding</keyword>
<keyword id="KW-0602">Photosynthesis</keyword>
<keyword id="KW-0604">Photosystem II</keyword>
<keyword id="KW-0934">Plastid</keyword>
<keyword id="KW-0793">Thylakoid</keyword>
<keyword id="KW-0812">Transmembrane</keyword>
<keyword id="KW-1133">Transmembrane helix</keyword>
<keyword id="KW-0813">Transport</keyword>
<sequence length="39" mass="4424">MTIDRTYPIFTVRWLAVHGLAVPTVSFLGSISAMQFIQR</sequence>